<proteinExistence type="evidence at protein level"/>
<feature type="chain" id="PRO_0000446021" description="Snake venom serine protease VaSP1">
    <location>
        <begin position="1"/>
        <end position="200" status="greater than"/>
    </location>
</feature>
<feature type="domain" description="Peptidase S1" evidence="4">
    <location>
        <begin position="1"/>
        <end position="200" status="greater than"/>
    </location>
</feature>
<feature type="active site" description="Charge relay system" evidence="1">
    <location>
        <position position="88"/>
    </location>
</feature>
<feature type="active site" description="Charge relay system" evidence="1">
    <location>
        <position position="182"/>
    </location>
</feature>
<feature type="site" description="Forms a covalent bond with the inhibitor PMSF" evidence="1">
    <location>
        <position position="182"/>
    </location>
</feature>
<feature type="disulfide bond" evidence="4">
    <location>
        <begin position="7"/>
        <end status="unknown"/>
    </location>
</feature>
<feature type="non-terminal residue">
    <location>
        <position position="200"/>
    </location>
</feature>
<reference key="1">
    <citation type="journal article" date="2014" name="Toxicon">
        <title>VaSP1, catalytically active serine proteinase from Vipera ammodytes ammodytes venom with unconventional active site triad.</title>
        <authorList>
            <person name="Kurtovic T."/>
            <person name="Brgles M."/>
            <person name="Leonardi A."/>
            <person name="Lang Balija M."/>
            <person name="Sajevic T."/>
            <person name="Krizaj I."/>
            <person name="Allmaier G."/>
            <person name="Marchetti-Deschmann M."/>
            <person name="Halassy B."/>
        </authorList>
    </citation>
    <scope>PROTEIN SEQUENCE</scope>
    <scope>SUBCELLULAR LOCATION</scope>
    <scope>SUBUNIT</scope>
    <scope>MASS SPECTROMETRY</scope>
    <source>
        <tissue>Venom</tissue>
    </source>
</reference>
<evidence type="ECO:0000250" key="1">
    <source>
        <dbReference type="UniProtKB" id="P0C5B4"/>
    </source>
</evidence>
<evidence type="ECO:0000269" key="2">
    <source>
    </source>
</evidence>
<evidence type="ECO:0000303" key="3">
    <source>
    </source>
</evidence>
<evidence type="ECO:0000305" key="4"/>
<evidence type="ECO:0000305" key="5">
    <source>
    </source>
</evidence>
<sequence length="200" mass="22208">VIGGDECNINEHPFLVALHTARXXRFYCAGTLINQEWVLTAARCDRXXXXXILGVHSKXXXXXXXXXXXXXXXXXXXXXXTYTRWDKDIMLIRLKRXXXXXXXXXXXXXXXXXXXXXXXXXIMGWGTITTTKVTYPDVPHCADINMFDYSVCQKXXXKLPEKSRTLCAGILQGGIDSCKGISGGPLICNGEIQGIVSYGK</sequence>
<dbReference type="GO" id="GO:0005576">
    <property type="term" value="C:extracellular region"/>
    <property type="evidence" value="ECO:0007669"/>
    <property type="project" value="UniProtKB-SubCell"/>
</dbReference>
<dbReference type="GO" id="GO:0030141">
    <property type="term" value="C:secretory granule"/>
    <property type="evidence" value="ECO:0007669"/>
    <property type="project" value="TreeGrafter"/>
</dbReference>
<dbReference type="GO" id="GO:0004252">
    <property type="term" value="F:serine-type endopeptidase activity"/>
    <property type="evidence" value="ECO:0007669"/>
    <property type="project" value="InterPro"/>
</dbReference>
<dbReference type="GO" id="GO:0090729">
    <property type="term" value="F:toxin activity"/>
    <property type="evidence" value="ECO:0007669"/>
    <property type="project" value="UniProtKB-KW"/>
</dbReference>
<dbReference type="GO" id="GO:0006508">
    <property type="term" value="P:proteolysis"/>
    <property type="evidence" value="ECO:0007669"/>
    <property type="project" value="InterPro"/>
</dbReference>
<dbReference type="CDD" id="cd00190">
    <property type="entry name" value="Tryp_SPc"/>
    <property type="match status" value="1"/>
</dbReference>
<dbReference type="Gene3D" id="2.40.10.10">
    <property type="entry name" value="Trypsin-like serine proteases"/>
    <property type="match status" value="2"/>
</dbReference>
<dbReference type="InterPro" id="IPR009003">
    <property type="entry name" value="Peptidase_S1_PA"/>
</dbReference>
<dbReference type="InterPro" id="IPR043504">
    <property type="entry name" value="Peptidase_S1_PA_chymotrypsin"/>
</dbReference>
<dbReference type="InterPro" id="IPR001314">
    <property type="entry name" value="Peptidase_S1A"/>
</dbReference>
<dbReference type="InterPro" id="IPR001254">
    <property type="entry name" value="Trypsin_dom"/>
</dbReference>
<dbReference type="PANTHER" id="PTHR24271:SF47">
    <property type="entry name" value="KALLIKREIN-1"/>
    <property type="match status" value="1"/>
</dbReference>
<dbReference type="PANTHER" id="PTHR24271">
    <property type="entry name" value="KALLIKREIN-RELATED"/>
    <property type="match status" value="1"/>
</dbReference>
<dbReference type="Pfam" id="PF00089">
    <property type="entry name" value="Trypsin"/>
    <property type="match status" value="1"/>
</dbReference>
<dbReference type="PRINTS" id="PR00722">
    <property type="entry name" value="CHYMOTRYPSIN"/>
</dbReference>
<dbReference type="SMART" id="SM00020">
    <property type="entry name" value="Tryp_SPc"/>
    <property type="match status" value="1"/>
</dbReference>
<dbReference type="SUPFAM" id="SSF50494">
    <property type="entry name" value="Trypsin-like serine proteases"/>
    <property type="match status" value="1"/>
</dbReference>
<dbReference type="PROSITE" id="PS50240">
    <property type="entry name" value="TRYPSIN_DOM"/>
    <property type="match status" value="1"/>
</dbReference>
<organism>
    <name type="scientific">Vipera ammodytes ammodytes</name>
    <name type="common">Western sand viper</name>
    <dbReference type="NCBI Taxonomy" id="8705"/>
    <lineage>
        <taxon>Eukaryota</taxon>
        <taxon>Metazoa</taxon>
        <taxon>Chordata</taxon>
        <taxon>Craniata</taxon>
        <taxon>Vertebrata</taxon>
        <taxon>Euteleostomi</taxon>
        <taxon>Lepidosauria</taxon>
        <taxon>Squamata</taxon>
        <taxon>Bifurcata</taxon>
        <taxon>Unidentata</taxon>
        <taxon>Episquamata</taxon>
        <taxon>Toxicofera</taxon>
        <taxon>Serpentes</taxon>
        <taxon>Colubroidea</taxon>
        <taxon>Viperidae</taxon>
        <taxon>Viperinae</taxon>
        <taxon>Vipera</taxon>
    </lineage>
</organism>
<name>VASP1_VIPAA</name>
<protein>
    <recommendedName>
        <fullName evidence="3">Snake venom serine protease VaSP1</fullName>
    </recommendedName>
</protein>
<comment type="function">
    <text evidence="2">Snake venom serine protease active on several blood coagulation enzymes. It completely cleaves fibrinogen Aalpha chain (FGA) after 120 minutes, partially cleaves Bbeta chain (FGB) (overnight) and has no activity on gamma chain. It does not release fibrinopeptides A and/or B exclusively, since the enzyme does not provoke fibrin polymerisation. It also degrades fibrin as efficiently as plasmin, and exhibits potent ability to cleave plasminogen and prothrombin, as well as heavy chain of factor X (F10). In vitro, it cleaves insulin B-chain (at positions His38-Leu39, Ala40-Leu41 and Tyr16-Leu17).</text>
</comment>
<comment type="activity regulation">
    <text evidence="2">Inhibited by Pefabloc (90% inhibition), DTT (90%), Zn(2+) (80%), trypsin inhibitor II (50%), and benzamidine (45%), but not inhibited by EDTA, Ca(2+), Mg(2+) and L-Cys.</text>
</comment>
<comment type="biophysicochemical properties">
    <kinetics>
        <KM evidence="2">48.2 uM for N-benzoyl-Phe-Val-Arg-p-nitroanilide</KM>
    </kinetics>
    <phDependence>
        <text evidence="2">Optimum pH is 9.0.</text>
    </phDependence>
</comment>
<comment type="subunit">
    <text evidence="2">Monomer.</text>
</comment>
<comment type="subcellular location">
    <subcellularLocation>
        <location evidence="2">Secreted</location>
    </subcellularLocation>
</comment>
<comment type="tissue specificity">
    <text evidence="5">Expressed by the venom gland.</text>
</comment>
<comment type="PTM">
    <text evidence="2">N-glycosylated. The protein exist in multiple isoforms.</text>
</comment>
<comment type="mass spectrometry" mass="31500.0" method="MALDI" evidence="2"/>
<comment type="similarity">
    <text evidence="4">Belongs to the peptidase S1 family. Snake venom subfamily.</text>
</comment>
<comment type="caution">
    <text evidence="5">Contains two of the three conventional residues of the catalytic triad: Asp and Ser are conserved, whereas the conventional His is replaced by an Arg.</text>
</comment>
<comment type="caution">
    <text evidence="5">Residues 23 to 200 are identified by mass spectrometry.</text>
</comment>
<keyword id="KW-0903">Direct protein sequencing</keyword>
<keyword id="KW-1015">Disulfide bond</keyword>
<keyword id="KW-0325">Glycoprotein</keyword>
<keyword id="KW-1199">Hemostasis impairing toxin</keyword>
<keyword id="KW-0964">Secreted</keyword>
<keyword id="KW-0800">Toxin</keyword>
<accession>P0DPS3</accession>